<dbReference type="EC" id="2.7.7.6" evidence="1"/>
<dbReference type="EMBL" id="AE015925">
    <property type="protein sequence ID" value="AAP05433.1"/>
    <property type="molecule type" value="Genomic_DNA"/>
</dbReference>
<dbReference type="RefSeq" id="WP_011006648.1">
    <property type="nucleotide sequence ID" value="NC_003361.3"/>
</dbReference>
<dbReference type="SMR" id="Q822J1"/>
<dbReference type="STRING" id="227941.CCA_00691"/>
<dbReference type="KEGG" id="cca:CCA_00691"/>
<dbReference type="eggNOG" id="COG0085">
    <property type="taxonomic scope" value="Bacteria"/>
</dbReference>
<dbReference type="HOGENOM" id="CLU_000524_4_1_0"/>
<dbReference type="OrthoDB" id="9803954at2"/>
<dbReference type="Proteomes" id="UP000002193">
    <property type="component" value="Chromosome"/>
</dbReference>
<dbReference type="GO" id="GO:0000428">
    <property type="term" value="C:DNA-directed RNA polymerase complex"/>
    <property type="evidence" value="ECO:0007669"/>
    <property type="project" value="UniProtKB-KW"/>
</dbReference>
<dbReference type="GO" id="GO:0003677">
    <property type="term" value="F:DNA binding"/>
    <property type="evidence" value="ECO:0007669"/>
    <property type="project" value="UniProtKB-UniRule"/>
</dbReference>
<dbReference type="GO" id="GO:0003899">
    <property type="term" value="F:DNA-directed RNA polymerase activity"/>
    <property type="evidence" value="ECO:0007669"/>
    <property type="project" value="UniProtKB-UniRule"/>
</dbReference>
<dbReference type="GO" id="GO:0032549">
    <property type="term" value="F:ribonucleoside binding"/>
    <property type="evidence" value="ECO:0007669"/>
    <property type="project" value="InterPro"/>
</dbReference>
<dbReference type="GO" id="GO:0006351">
    <property type="term" value="P:DNA-templated transcription"/>
    <property type="evidence" value="ECO:0007669"/>
    <property type="project" value="UniProtKB-UniRule"/>
</dbReference>
<dbReference type="CDD" id="cd00653">
    <property type="entry name" value="RNA_pol_B_RPB2"/>
    <property type="match status" value="1"/>
</dbReference>
<dbReference type="FunFam" id="3.90.1800.10:FF:000001">
    <property type="entry name" value="DNA-directed RNA polymerase subunit beta"/>
    <property type="match status" value="1"/>
</dbReference>
<dbReference type="Gene3D" id="2.40.50.100">
    <property type="match status" value="1"/>
</dbReference>
<dbReference type="Gene3D" id="2.40.50.150">
    <property type="match status" value="1"/>
</dbReference>
<dbReference type="Gene3D" id="3.90.1100.10">
    <property type="match status" value="2"/>
</dbReference>
<dbReference type="Gene3D" id="2.40.270.10">
    <property type="entry name" value="DNA-directed RNA polymerase, subunit 2, domain 6"/>
    <property type="match status" value="2"/>
</dbReference>
<dbReference type="Gene3D" id="3.90.1800.10">
    <property type="entry name" value="RNA polymerase alpha subunit dimerisation domain"/>
    <property type="match status" value="1"/>
</dbReference>
<dbReference type="Gene3D" id="3.90.1110.10">
    <property type="entry name" value="RNA polymerase Rpb2, domain 2"/>
    <property type="match status" value="1"/>
</dbReference>
<dbReference type="HAMAP" id="MF_01321">
    <property type="entry name" value="RNApol_bact_RpoB"/>
    <property type="match status" value="1"/>
</dbReference>
<dbReference type="InterPro" id="IPR019462">
    <property type="entry name" value="DNA-dir_RNA_pol_bsu_external_1"/>
</dbReference>
<dbReference type="InterPro" id="IPR015712">
    <property type="entry name" value="DNA-dir_RNA_pol_su2"/>
</dbReference>
<dbReference type="InterPro" id="IPR007120">
    <property type="entry name" value="DNA-dir_RNAP_su2_dom"/>
</dbReference>
<dbReference type="InterPro" id="IPR037033">
    <property type="entry name" value="DNA-dir_RNAP_su2_hyb_sf"/>
</dbReference>
<dbReference type="InterPro" id="IPR010243">
    <property type="entry name" value="RNA_pol_bsu_bac"/>
</dbReference>
<dbReference type="InterPro" id="IPR007121">
    <property type="entry name" value="RNA_pol_bsu_CS"/>
</dbReference>
<dbReference type="InterPro" id="IPR007644">
    <property type="entry name" value="RNA_pol_bsu_protrusion"/>
</dbReference>
<dbReference type="InterPro" id="IPR007642">
    <property type="entry name" value="RNA_pol_Rpb2_2"/>
</dbReference>
<dbReference type="InterPro" id="IPR037034">
    <property type="entry name" value="RNA_pol_Rpb2_2_sf"/>
</dbReference>
<dbReference type="InterPro" id="IPR007645">
    <property type="entry name" value="RNA_pol_Rpb2_3"/>
</dbReference>
<dbReference type="InterPro" id="IPR007641">
    <property type="entry name" value="RNA_pol_Rpb2_7"/>
</dbReference>
<dbReference type="InterPro" id="IPR014724">
    <property type="entry name" value="RNA_pol_RPB2_OB-fold"/>
</dbReference>
<dbReference type="NCBIfam" id="NF001616">
    <property type="entry name" value="PRK00405.1"/>
    <property type="match status" value="1"/>
</dbReference>
<dbReference type="NCBIfam" id="TIGR02013">
    <property type="entry name" value="rpoB"/>
    <property type="match status" value="1"/>
</dbReference>
<dbReference type="PANTHER" id="PTHR20856">
    <property type="entry name" value="DNA-DIRECTED RNA POLYMERASE I SUBUNIT 2"/>
    <property type="match status" value="1"/>
</dbReference>
<dbReference type="Pfam" id="PF04563">
    <property type="entry name" value="RNA_pol_Rpb2_1"/>
    <property type="match status" value="1"/>
</dbReference>
<dbReference type="Pfam" id="PF04561">
    <property type="entry name" value="RNA_pol_Rpb2_2"/>
    <property type="match status" value="2"/>
</dbReference>
<dbReference type="Pfam" id="PF04565">
    <property type="entry name" value="RNA_pol_Rpb2_3"/>
    <property type="match status" value="1"/>
</dbReference>
<dbReference type="Pfam" id="PF10385">
    <property type="entry name" value="RNA_pol_Rpb2_45"/>
    <property type="match status" value="1"/>
</dbReference>
<dbReference type="Pfam" id="PF00562">
    <property type="entry name" value="RNA_pol_Rpb2_6"/>
    <property type="match status" value="1"/>
</dbReference>
<dbReference type="Pfam" id="PF04560">
    <property type="entry name" value="RNA_pol_Rpb2_7"/>
    <property type="match status" value="1"/>
</dbReference>
<dbReference type="SUPFAM" id="SSF64484">
    <property type="entry name" value="beta and beta-prime subunits of DNA dependent RNA-polymerase"/>
    <property type="match status" value="1"/>
</dbReference>
<dbReference type="PROSITE" id="PS01166">
    <property type="entry name" value="RNA_POL_BETA"/>
    <property type="match status" value="1"/>
</dbReference>
<protein>
    <recommendedName>
        <fullName evidence="1">DNA-directed RNA polymerase subunit beta</fullName>
        <shortName evidence="1">RNAP subunit beta</shortName>
        <ecNumber evidence="1">2.7.7.6</ecNumber>
    </recommendedName>
    <alternativeName>
        <fullName evidence="1">RNA polymerase subunit beta</fullName>
    </alternativeName>
    <alternativeName>
        <fullName evidence="1">Transcriptase subunit beta</fullName>
    </alternativeName>
</protein>
<feature type="chain" id="PRO_0000047878" description="DNA-directed RNA polymerase subunit beta">
    <location>
        <begin position="1"/>
        <end position="1252"/>
    </location>
</feature>
<organism>
    <name type="scientific">Chlamydia caviae (strain ATCC VR-813 / DSM 19441 / 03DC25 / GPIC)</name>
    <name type="common">Chlamydophila caviae</name>
    <dbReference type="NCBI Taxonomy" id="227941"/>
    <lineage>
        <taxon>Bacteria</taxon>
        <taxon>Pseudomonadati</taxon>
        <taxon>Chlamydiota</taxon>
        <taxon>Chlamydiia</taxon>
        <taxon>Chlamydiales</taxon>
        <taxon>Chlamydiaceae</taxon>
        <taxon>Chlamydia/Chlamydophila group</taxon>
        <taxon>Chlamydia</taxon>
    </lineage>
</organism>
<reference key="1">
    <citation type="journal article" date="2003" name="Nucleic Acids Res.">
        <title>Genome sequence of Chlamydophila caviae (Chlamydia psittaci GPIC): examining the role of niche-specific genes in the evolution of the Chlamydiaceae.</title>
        <authorList>
            <person name="Read T.D."/>
            <person name="Myers G.S.A."/>
            <person name="Brunham R.C."/>
            <person name="Nelson W.C."/>
            <person name="Paulsen I.T."/>
            <person name="Heidelberg J.F."/>
            <person name="Holtzapple E.K."/>
            <person name="Khouri H.M."/>
            <person name="Federova N.B."/>
            <person name="Carty H.A."/>
            <person name="Umayam L.A."/>
            <person name="Haft D.H."/>
            <person name="Peterson J.D."/>
            <person name="Beanan M.J."/>
            <person name="White O."/>
            <person name="Salzberg S.L."/>
            <person name="Hsia R.-C."/>
            <person name="McClarty G."/>
            <person name="Rank R.G."/>
            <person name="Bavoil P.M."/>
            <person name="Fraser C.M."/>
        </authorList>
    </citation>
    <scope>NUCLEOTIDE SEQUENCE [LARGE SCALE GENOMIC DNA]</scope>
    <source>
        <strain>ATCC VR-813 / DSM 19441 / 03DC25 / GPIC</strain>
    </source>
</reference>
<keyword id="KW-0240">DNA-directed RNA polymerase</keyword>
<keyword id="KW-0548">Nucleotidyltransferase</keyword>
<keyword id="KW-0804">Transcription</keyword>
<keyword id="KW-0808">Transferase</keyword>
<sequence>MFKCPERVSVKKKEDILDLPNLIEIQIKSYKQFLQIGKLAEERDNVGLEEVFREIFPIKSYNEATILEYLSYNLGVPKYSPEECIRRGITYSVTLKVRFRLTDETGIKEEEVYMGTIPIMTDKGTFIINGAERVIVSQVHRSPGINFEQEKHSKGNILFSFRIIPYRGSWLEAIFDINDLIYIHIDRKKRRRKILAMTFIRALGYSSDADIIEEFFQIEERSLKSEKDFTLLVGKILADNVLDESSSLVYGKAGEKLSTAMLKRMLDADISTLKIAVEADENHPIIKMLAKDPTDSYEAALKDFYRRLRPGEPATLANARSTIMRLFFDSKRYNLGRVGRYKLNRKLGFPMDEETLSQVTLRKEDVIGALKYLIRLKMGDERASIDDIDHLANRRVRSVGELIQNQCRSGLARMEKIVRERMNLFDFSSDTLIPGKIISAKGLASVLKDFFGRSQLSQFMDQTNPVAELTHKRRLSALGPGGLNRERAGFEVRDVHASHYGRICPIETPEGPNIGLITSLSSFAKINEFGFIETPYRIVRDGVVTDEIEYMTADVEEECVIAQASAALDEYNMFVDPVCWARCRGEAFEADTSTVTHMDVSPKQLVSIVTGLIPFLEHDDANRALMGSNMQRQAVPLLKTEAPIVGTGLEARAAKDSGAIVVAEEDGVVDYVDGYKVVIAPKHNPTLKRTYDLKKFLRSNSGTCINQRPLCSVGDVIVKGDVIADGPATDQGELALGKNILVAFMPWYGYNFEDAIIISEKLIKQDAYTSIYIEEFELTARDTKLGKEEITRDIPNVSEEVLANLGEDGIIRIGAEVKPGDILVGKITPKSETELAPEERLLRAIFGEKAADVKDASLTVPPGTEGVVMDVKVFSRKDRLSKSDDELVEEAVHLKDLQKGYKNQVSVLKTEYREKLGALLLNEKAPASIIHRRTADILVQEGTVFDQETIELLEQESLVDLLMPPCEMYDVLKGLLSDYETSLQRLEVNYKTEVEHIREGDADLDHGVIRQVKVYVASKRKLQVGDKMAGRHGNKGVVSKIVPEADMPYLANGETVQMILNPLGVPSRMNLGQVLETHLGYAAKTAGIHVKTPVFEGFPESRIWDMMIEQGLPADGKSYLYDGKTGERFDNTVVIGYIYMLKLSHLIADKIHARSIGPYSLVTQQPLGGKAQMGGQRFGEMEVWALEAYGVAHMLQEILTVKSDDVSGRTRIYESIVKGENLLKSGTPESFNVLIKEMQGLGLDVRPMVVDA</sequence>
<proteinExistence type="inferred from homology"/>
<name>RPOB_CHLCV</name>
<gene>
    <name evidence="1" type="primary">rpoB</name>
    <name type="ordered locus">CCA_00691</name>
</gene>
<comment type="function">
    <text evidence="1">DNA-dependent RNA polymerase catalyzes the transcription of DNA into RNA using the four ribonucleoside triphosphates as substrates.</text>
</comment>
<comment type="catalytic activity">
    <reaction evidence="1">
        <text>RNA(n) + a ribonucleoside 5'-triphosphate = RNA(n+1) + diphosphate</text>
        <dbReference type="Rhea" id="RHEA:21248"/>
        <dbReference type="Rhea" id="RHEA-COMP:14527"/>
        <dbReference type="Rhea" id="RHEA-COMP:17342"/>
        <dbReference type="ChEBI" id="CHEBI:33019"/>
        <dbReference type="ChEBI" id="CHEBI:61557"/>
        <dbReference type="ChEBI" id="CHEBI:140395"/>
        <dbReference type="EC" id="2.7.7.6"/>
    </reaction>
</comment>
<comment type="subunit">
    <text evidence="1">The RNAP catalytic core consists of 2 alpha, 1 beta, 1 beta' and 1 omega subunit. When a sigma factor is associated with the core the holoenzyme is formed, which can initiate transcription.</text>
</comment>
<comment type="similarity">
    <text evidence="1">Belongs to the RNA polymerase beta chain family.</text>
</comment>
<evidence type="ECO:0000255" key="1">
    <source>
        <dbReference type="HAMAP-Rule" id="MF_01321"/>
    </source>
</evidence>
<accession>Q822J1</accession>